<keyword id="KW-0934">Plastid</keyword>
<keyword id="KW-0687">Ribonucleoprotein</keyword>
<keyword id="KW-0689">Ribosomal protein</keyword>
<keyword id="KW-0694">RNA-binding</keyword>
<keyword id="KW-0699">rRNA-binding</keyword>
<evidence type="ECO:0000250" key="1"/>
<evidence type="ECO:0000305" key="2"/>
<dbReference type="EMBL" id="DQ398104">
    <property type="protein sequence ID" value="ABD33982.1"/>
    <property type="molecule type" value="Genomic_DNA"/>
</dbReference>
<dbReference type="RefSeq" id="YP_635934.1">
    <property type="nucleotide sequence ID" value="NC_008100.1"/>
</dbReference>
<dbReference type="SMR" id="Q2EEW0"/>
<dbReference type="GeneID" id="4100428"/>
<dbReference type="GO" id="GO:0022627">
    <property type="term" value="C:cytosolic small ribosomal subunit"/>
    <property type="evidence" value="ECO:0007669"/>
    <property type="project" value="TreeGrafter"/>
</dbReference>
<dbReference type="GO" id="GO:0009536">
    <property type="term" value="C:plastid"/>
    <property type="evidence" value="ECO:0007669"/>
    <property type="project" value="UniProtKB-SubCell"/>
</dbReference>
<dbReference type="GO" id="GO:0019843">
    <property type="term" value="F:rRNA binding"/>
    <property type="evidence" value="ECO:0007669"/>
    <property type="project" value="UniProtKB-KW"/>
</dbReference>
<dbReference type="GO" id="GO:0003735">
    <property type="term" value="F:structural constituent of ribosome"/>
    <property type="evidence" value="ECO:0007669"/>
    <property type="project" value="InterPro"/>
</dbReference>
<dbReference type="GO" id="GO:0006412">
    <property type="term" value="P:translation"/>
    <property type="evidence" value="ECO:0007669"/>
    <property type="project" value="InterPro"/>
</dbReference>
<dbReference type="Gene3D" id="3.30.1140.32">
    <property type="entry name" value="Ribosomal protein S3, C-terminal domain"/>
    <property type="match status" value="1"/>
</dbReference>
<dbReference type="HAMAP" id="MF_01309_B">
    <property type="entry name" value="Ribosomal_uS3_B"/>
    <property type="match status" value="1"/>
</dbReference>
<dbReference type="InterPro" id="IPR036419">
    <property type="entry name" value="Ribosomal_S3_C_sf"/>
</dbReference>
<dbReference type="InterPro" id="IPR005704">
    <property type="entry name" value="Ribosomal_uS3_bac-typ"/>
</dbReference>
<dbReference type="InterPro" id="IPR001351">
    <property type="entry name" value="Ribosomal_uS3_C"/>
</dbReference>
<dbReference type="PANTHER" id="PTHR11760">
    <property type="entry name" value="30S/40S RIBOSOMAL PROTEIN S3"/>
    <property type="match status" value="1"/>
</dbReference>
<dbReference type="PANTHER" id="PTHR11760:SF19">
    <property type="entry name" value="SMALL RIBOSOMAL SUBUNIT PROTEIN US3C"/>
    <property type="match status" value="1"/>
</dbReference>
<dbReference type="Pfam" id="PF00189">
    <property type="entry name" value="Ribosomal_S3_C"/>
    <property type="match status" value="1"/>
</dbReference>
<dbReference type="SUPFAM" id="SSF54821">
    <property type="entry name" value="Ribosomal protein S3 C-terminal domain"/>
    <property type="match status" value="1"/>
</dbReference>
<name>RR3_HELSJ</name>
<feature type="chain" id="PRO_0000293944" description="Small ribosomal subunit protein uS3c">
    <location>
        <begin position="1"/>
        <end position="241"/>
    </location>
</feature>
<proteinExistence type="inferred from homology"/>
<gene>
    <name type="primary">rps3</name>
</gene>
<accession>Q2EEW0</accession>
<geneLocation type="non-photosynthetic plastid"/>
<reference key="1">
    <citation type="journal article" date="2006" name="BMC Biol.">
        <title>The complete plastid genome sequence of the parasitic green alga, Helicosporidium sp. is highly reduced and structured.</title>
        <authorList>
            <person name="de Koning A.P."/>
            <person name="Keeling P.J."/>
        </authorList>
    </citation>
    <scope>NUCLEOTIDE SEQUENCE [LARGE SCALE GENOMIC DNA]</scope>
</reference>
<comment type="subunit">
    <text evidence="1">Part of the 30S ribosomal subunit.</text>
</comment>
<comment type="subcellular location">
    <subcellularLocation>
        <location>Plastid</location>
    </subcellularLocation>
</comment>
<comment type="similarity">
    <text evidence="2">Belongs to the universal ribosomal protein uS3 family.</text>
</comment>
<organism>
    <name type="scientific">Helicosporidium sp. subsp. Simulium jonesii</name>
    <name type="common">Green alga</name>
    <dbReference type="NCBI Taxonomy" id="145475"/>
    <lineage>
        <taxon>Eukaryota</taxon>
        <taxon>Viridiplantae</taxon>
        <taxon>Chlorophyta</taxon>
        <taxon>core chlorophytes</taxon>
        <taxon>Trebouxiophyceae</taxon>
        <taxon>Chlorellales</taxon>
        <taxon>Chlorellaceae</taxon>
        <taxon>Helicosporidium</taxon>
    </lineage>
</organism>
<sequence length="241" mass="28124">MDFISKTIGLRLGYNKTHKLIWSLSKNNPIFIQTNHFLEYIIKNDPFFCGLILIDFQLMQYIVVHKNQLGNFSPLKNNLPNSINLFLKLKIATEIQSNFNSVFILEERLHFLFFKYLNKMKNLKMLNNLKIKVKIKFLNNPILEPQWIFYKLHQDLYKGINIRRALAKISSNVIKKGAEGVKIQIKGRINGVDKATVIVEEKGKMPLQNLSSEINYYSRALKTVYGLLGVKIWVFKGFLLK</sequence>
<protein>
    <recommendedName>
        <fullName evidence="2">Small ribosomal subunit protein uS3c</fullName>
    </recommendedName>
    <alternativeName>
        <fullName>Plastid 30S ribosomal protein S3</fullName>
    </alternativeName>
</protein>